<organism>
    <name type="scientific">Mus musculus</name>
    <name type="common">Mouse</name>
    <dbReference type="NCBI Taxonomy" id="10090"/>
    <lineage>
        <taxon>Eukaryota</taxon>
        <taxon>Metazoa</taxon>
        <taxon>Chordata</taxon>
        <taxon>Craniata</taxon>
        <taxon>Vertebrata</taxon>
        <taxon>Euteleostomi</taxon>
        <taxon>Mammalia</taxon>
        <taxon>Eutheria</taxon>
        <taxon>Euarchontoglires</taxon>
        <taxon>Glires</taxon>
        <taxon>Rodentia</taxon>
        <taxon>Myomorpha</taxon>
        <taxon>Muroidea</taxon>
        <taxon>Muridae</taxon>
        <taxon>Murinae</taxon>
        <taxon>Mus</taxon>
        <taxon>Mus</taxon>
    </lineage>
</organism>
<evidence type="ECO:0000250" key="1"/>
<evidence type="ECO:0000250" key="2">
    <source>
        <dbReference type="UniProtKB" id="Q9UKD1"/>
    </source>
</evidence>
<evidence type="ECO:0000255" key="3"/>
<evidence type="ECO:0000255" key="4">
    <source>
        <dbReference type="PROSITE-ProRule" id="PRU00185"/>
    </source>
</evidence>
<sequence length="530" mass="56631">MATPDVSVHMEEVVVVTTPDTAVDGSGVEEVKTVLVTTNLAPHGGDLTEDNMETENAAAAAAAAFTASSQLKEAVLVKMAEEGENLEAEIVYPITCGDSRANLIWRKFVCPGINVKCVQYDEHVISPKEFVHLAGKSTLKDWKRAIRMNGIMLRKIMDSGELDFYQHDKVCSNTCRSTKIDLSGARVSLSSPTSTEYIPLTPAAADVNGSPATITIETCEDPGDWTTTIGDDTFAFWRGLKDAGLLDEVIQEFQQELEETMKGLQQRVQDPPLQLRDAVLLNNIVQNFGMLDLVKKVLASHKCQMDRSREQYARDLAALEQQCDEHRRRAKELKHKSQHLSNVLMTLTPVPLPSPMKRPRLARATSGPAAMASQVLTQSAQIALSPGMPVSQLTSVPLGKVVSTLPSTVLGKGSPQAAPASSPASPLLGGYTVLASSGSTFPNAVEIHPDTSSLTVLSTAAMQDGSTVLKVVSPLQLLTLPGLGPTLQNVAQASPAGSTIVTMPTATATGPEEHTATIEVAAVAEDHEQK</sequence>
<protein>
    <recommendedName>
        <fullName>Glucocorticoid modulatory element-binding protein 2</fullName>
        <shortName>GMEB-2</shortName>
    </recommendedName>
</protein>
<feature type="chain" id="PRO_0000074093" description="Glucocorticoid modulatory element-binding protein 2">
    <location>
        <begin position="1"/>
        <end position="530"/>
    </location>
</feature>
<feature type="domain" description="SAND" evidence="4">
    <location>
        <begin position="81"/>
        <end position="163"/>
    </location>
</feature>
<feature type="coiled-coil region" evidence="3">
    <location>
        <begin position="245"/>
        <end position="270"/>
    </location>
</feature>
<feature type="coiled-coil region" evidence="3">
    <location>
        <begin position="304"/>
        <end position="344"/>
    </location>
</feature>
<feature type="binding site" evidence="1">
    <location>
        <position position="110"/>
    </location>
    <ligand>
        <name>Zn(2+)</name>
        <dbReference type="ChEBI" id="CHEBI:29105"/>
    </ligand>
</feature>
<feature type="binding site" evidence="1">
    <location>
        <position position="136"/>
    </location>
    <ligand>
        <name>DNA</name>
        <dbReference type="ChEBI" id="CHEBI:16991"/>
    </ligand>
</feature>
<feature type="binding site" evidence="1">
    <location>
        <position position="140"/>
    </location>
    <ligand>
        <name>DNA</name>
        <dbReference type="ChEBI" id="CHEBI:16991"/>
    </ligand>
</feature>
<feature type="binding site" evidence="1">
    <location>
        <position position="143"/>
    </location>
    <ligand>
        <name>DNA</name>
        <dbReference type="ChEBI" id="CHEBI:16991"/>
    </ligand>
</feature>
<feature type="binding site" evidence="1">
    <location>
        <position position="154"/>
    </location>
    <ligand>
        <name>DNA</name>
        <dbReference type="ChEBI" id="CHEBI:16991"/>
    </ligand>
</feature>
<feature type="binding site" evidence="1">
    <location>
        <position position="167"/>
    </location>
    <ligand>
        <name>Zn(2+)</name>
        <dbReference type="ChEBI" id="CHEBI:29105"/>
    </ligand>
</feature>
<feature type="binding site" evidence="1">
    <location>
        <position position="171"/>
    </location>
    <ligand>
        <name>Zn(2+)</name>
        <dbReference type="ChEBI" id="CHEBI:29105"/>
    </ligand>
</feature>
<feature type="binding site" evidence="1">
    <location>
        <position position="175"/>
    </location>
    <ligand>
        <name>Zn(2+)</name>
        <dbReference type="ChEBI" id="CHEBI:29105"/>
    </ligand>
</feature>
<feature type="modified residue" description="Phosphoserine" evidence="2">
    <location>
        <position position="373"/>
    </location>
</feature>
<feature type="cross-link" description="Glycyl lysine isopeptide (Lys-Gly) (interchain with G-Cter in SUMO1); alternate" evidence="2">
    <location>
        <position position="155"/>
    </location>
</feature>
<feature type="cross-link" description="Glycyl lysine isopeptide (Lys-Gly) (interchain with G-Cter in SUMO2); alternate" evidence="2">
    <location>
        <position position="155"/>
    </location>
</feature>
<dbReference type="EMBL" id="BC029763">
    <property type="protein sequence ID" value="AAH29763.1"/>
    <property type="molecule type" value="mRNA"/>
</dbReference>
<dbReference type="EMBL" id="BC059066">
    <property type="protein sequence ID" value="AAH59066.1"/>
    <property type="molecule type" value="mRNA"/>
</dbReference>
<dbReference type="CCDS" id="CCDS17206.1"/>
<dbReference type="RefSeq" id="NP_001406325.1">
    <property type="nucleotide sequence ID" value="NM_001419396.1"/>
</dbReference>
<dbReference type="RefSeq" id="NP_001406326.1">
    <property type="nucleotide sequence ID" value="NM_001419397.1"/>
</dbReference>
<dbReference type="RefSeq" id="NP_937812.1">
    <property type="nucleotide sequence ID" value="NM_198169.3"/>
</dbReference>
<dbReference type="RefSeq" id="XP_006500665.1">
    <property type="nucleotide sequence ID" value="XM_006500602.3"/>
</dbReference>
<dbReference type="RefSeq" id="XP_006500666.1">
    <property type="nucleotide sequence ID" value="XM_006500603.1"/>
</dbReference>
<dbReference type="RefSeq" id="XP_006500667.1">
    <property type="nucleotide sequence ID" value="XM_006500604.3"/>
</dbReference>
<dbReference type="RefSeq" id="XP_006500668.1">
    <property type="nucleotide sequence ID" value="XM_006500605.4"/>
</dbReference>
<dbReference type="SMR" id="P58929"/>
<dbReference type="BioGRID" id="230807">
    <property type="interactions" value="12"/>
</dbReference>
<dbReference type="FunCoup" id="P58929">
    <property type="interactions" value="2835"/>
</dbReference>
<dbReference type="IntAct" id="P58929">
    <property type="interactions" value="11"/>
</dbReference>
<dbReference type="STRING" id="10090.ENSMUSP00000037075"/>
<dbReference type="GlyGen" id="P58929">
    <property type="glycosylation" value="2 sites, 1 O-linked glycan (2 sites)"/>
</dbReference>
<dbReference type="iPTMnet" id="P58929"/>
<dbReference type="PhosphoSitePlus" id="P58929"/>
<dbReference type="jPOST" id="P58929"/>
<dbReference type="PaxDb" id="10090-ENSMUSP00000037075"/>
<dbReference type="PeptideAtlas" id="P58929"/>
<dbReference type="ProteomicsDB" id="266820"/>
<dbReference type="Pumba" id="P58929"/>
<dbReference type="Antibodypedia" id="1759">
    <property type="antibodies" value="117 antibodies from 23 providers"/>
</dbReference>
<dbReference type="DNASU" id="229004"/>
<dbReference type="Ensembl" id="ENSMUST00000049032.13">
    <property type="protein sequence ID" value="ENSMUSP00000037075.7"/>
    <property type="gene ID" value="ENSMUSG00000038705.14"/>
</dbReference>
<dbReference type="GeneID" id="229004"/>
<dbReference type="KEGG" id="mmu:229004"/>
<dbReference type="UCSC" id="uc008olq.1">
    <property type="organism name" value="mouse"/>
</dbReference>
<dbReference type="AGR" id="MGI:2652836"/>
<dbReference type="CTD" id="26205"/>
<dbReference type="MGI" id="MGI:2652836">
    <property type="gene designation" value="Gmeb2"/>
</dbReference>
<dbReference type="VEuPathDB" id="HostDB:ENSMUSG00000038705"/>
<dbReference type="eggNOG" id="KOG4333">
    <property type="taxonomic scope" value="Eukaryota"/>
</dbReference>
<dbReference type="GeneTree" id="ENSGT00410000025596"/>
<dbReference type="HOGENOM" id="CLU_030344_2_0_1"/>
<dbReference type="InParanoid" id="P58929"/>
<dbReference type="OMA" id="DTFAFWQ"/>
<dbReference type="OrthoDB" id="5792412at2759"/>
<dbReference type="PhylomeDB" id="P58929"/>
<dbReference type="TreeFam" id="TF317090"/>
<dbReference type="BioGRID-ORCS" id="229004">
    <property type="hits" value="12 hits in 85 CRISPR screens"/>
</dbReference>
<dbReference type="ChiTaRS" id="Gmeb2">
    <property type="organism name" value="mouse"/>
</dbReference>
<dbReference type="PRO" id="PR:P58929"/>
<dbReference type="Proteomes" id="UP000000589">
    <property type="component" value="Chromosome 2"/>
</dbReference>
<dbReference type="RNAct" id="P58929">
    <property type="molecule type" value="protein"/>
</dbReference>
<dbReference type="Bgee" id="ENSMUSG00000038705">
    <property type="expression patterns" value="Expressed in granulocyte and 219 other cell types or tissues"/>
</dbReference>
<dbReference type="ExpressionAtlas" id="P58929">
    <property type="expression patterns" value="baseline and differential"/>
</dbReference>
<dbReference type="GO" id="GO:0005829">
    <property type="term" value="C:cytosol"/>
    <property type="evidence" value="ECO:0007669"/>
    <property type="project" value="Ensembl"/>
</dbReference>
<dbReference type="GO" id="GO:0005654">
    <property type="term" value="C:nucleoplasm"/>
    <property type="evidence" value="ECO:0007669"/>
    <property type="project" value="Ensembl"/>
</dbReference>
<dbReference type="GO" id="GO:0042802">
    <property type="term" value="F:identical protein binding"/>
    <property type="evidence" value="ECO:0007669"/>
    <property type="project" value="Ensembl"/>
</dbReference>
<dbReference type="GO" id="GO:0046872">
    <property type="term" value="F:metal ion binding"/>
    <property type="evidence" value="ECO:0007669"/>
    <property type="project" value="UniProtKB-KW"/>
</dbReference>
<dbReference type="GO" id="GO:1990837">
    <property type="term" value="F:sequence-specific double-stranded DNA binding"/>
    <property type="evidence" value="ECO:0007669"/>
    <property type="project" value="Ensembl"/>
</dbReference>
<dbReference type="FunFam" id="3.10.390.10:FF:000003">
    <property type="entry name" value="glucocorticoid modulatory element-binding protein 1 isoform X2"/>
    <property type="match status" value="1"/>
</dbReference>
<dbReference type="Gene3D" id="3.10.390.10">
    <property type="entry name" value="SAND domain-like"/>
    <property type="match status" value="1"/>
</dbReference>
<dbReference type="InterPro" id="IPR010919">
    <property type="entry name" value="SAND-like_dom_sf"/>
</dbReference>
<dbReference type="InterPro" id="IPR000770">
    <property type="entry name" value="SAND_dom"/>
</dbReference>
<dbReference type="PANTHER" id="PTHR10417">
    <property type="entry name" value="GLUCOCORTICOID MODULATORY ELEMENT-BINDING PROTEIN"/>
    <property type="match status" value="1"/>
</dbReference>
<dbReference type="PANTHER" id="PTHR10417:SF2">
    <property type="entry name" value="GLUCOCORTICOID MODULATORY ELEMENT-BINDING PROTEIN 2"/>
    <property type="match status" value="1"/>
</dbReference>
<dbReference type="Pfam" id="PF01342">
    <property type="entry name" value="SAND"/>
    <property type="match status" value="1"/>
</dbReference>
<dbReference type="SMART" id="SM00258">
    <property type="entry name" value="SAND"/>
    <property type="match status" value="1"/>
</dbReference>
<dbReference type="SUPFAM" id="SSF63763">
    <property type="entry name" value="SAND domain-like"/>
    <property type="match status" value="1"/>
</dbReference>
<dbReference type="PROSITE" id="PS50864">
    <property type="entry name" value="SAND"/>
    <property type="match status" value="1"/>
</dbReference>
<name>GMEB2_MOUSE</name>
<accession>P58929</accession>
<accession>Q6PCY0</accession>
<reference key="1">
    <citation type="journal article" date="2004" name="Genome Res.">
        <title>The status, quality, and expansion of the NIH full-length cDNA project: the Mammalian Gene Collection (MGC).</title>
        <authorList>
            <consortium name="The MGC Project Team"/>
        </authorList>
    </citation>
    <scope>NUCLEOTIDE SEQUENCE [LARGE SCALE MRNA]</scope>
    <source>
        <strain>C57BL/6J</strain>
        <strain>FVB/N</strain>
        <tissue>Brain</tissue>
        <tissue>Mammary tumor</tissue>
    </source>
</reference>
<gene>
    <name type="primary">Gmeb2</name>
</gene>
<keyword id="KW-0175">Coiled coil</keyword>
<keyword id="KW-0963">Cytoplasm</keyword>
<keyword id="KW-0238">DNA-binding</keyword>
<keyword id="KW-1017">Isopeptide bond</keyword>
<keyword id="KW-0479">Metal-binding</keyword>
<keyword id="KW-0539">Nucleus</keyword>
<keyword id="KW-0597">Phosphoprotein</keyword>
<keyword id="KW-1185">Reference proteome</keyword>
<keyword id="KW-0804">Transcription</keyword>
<keyword id="KW-0805">Transcription regulation</keyword>
<keyword id="KW-0832">Ubl conjugation</keyword>
<keyword id="KW-0862">Zinc</keyword>
<proteinExistence type="evidence at transcript level"/>
<comment type="function">
    <text evidence="1">Trans-acting factor that binds to glucocorticoid modulatory elements (GME) present in the TAT (tyrosine aminotransferase) promoter and increases sensitivity to low concentrations of glucocorticoids. Also binds to the transferrin receptor promoter (By similarity).</text>
</comment>
<comment type="subunit">
    <text evidence="1">Homodimer, and heterodimer of GMEB1 and GMEB2. Interacts with the glucocorticoid receptor (NR3C1). May interact with CREB-binding protein (CBP) (By similarity).</text>
</comment>
<comment type="subcellular location">
    <subcellularLocation>
        <location evidence="4">Nucleus</location>
    </subcellularLocation>
    <subcellularLocation>
        <location evidence="1">Cytoplasm</location>
    </subcellularLocation>
    <text evidence="1">May be also cytoplasmic.</text>
</comment>